<name>NUSB_COLP3</name>
<dbReference type="EMBL" id="CP000083">
    <property type="protein sequence ID" value="AAZ25543.1"/>
    <property type="molecule type" value="Genomic_DNA"/>
</dbReference>
<dbReference type="RefSeq" id="WP_011042368.1">
    <property type="nucleotide sequence ID" value="NC_003910.7"/>
</dbReference>
<dbReference type="SMR" id="Q485J1"/>
<dbReference type="STRING" id="167879.CPS_1532"/>
<dbReference type="KEGG" id="cps:CPS_1532"/>
<dbReference type="eggNOG" id="COG0781">
    <property type="taxonomic scope" value="Bacteria"/>
</dbReference>
<dbReference type="HOGENOM" id="CLU_087843_4_1_6"/>
<dbReference type="Proteomes" id="UP000000547">
    <property type="component" value="Chromosome"/>
</dbReference>
<dbReference type="GO" id="GO:0005829">
    <property type="term" value="C:cytosol"/>
    <property type="evidence" value="ECO:0007669"/>
    <property type="project" value="TreeGrafter"/>
</dbReference>
<dbReference type="GO" id="GO:0003723">
    <property type="term" value="F:RNA binding"/>
    <property type="evidence" value="ECO:0007669"/>
    <property type="project" value="UniProtKB-UniRule"/>
</dbReference>
<dbReference type="GO" id="GO:0006353">
    <property type="term" value="P:DNA-templated transcription termination"/>
    <property type="evidence" value="ECO:0007669"/>
    <property type="project" value="UniProtKB-UniRule"/>
</dbReference>
<dbReference type="GO" id="GO:0031564">
    <property type="term" value="P:transcription antitermination"/>
    <property type="evidence" value="ECO:0007669"/>
    <property type="project" value="UniProtKB-KW"/>
</dbReference>
<dbReference type="CDD" id="cd00619">
    <property type="entry name" value="Terminator_NusB"/>
    <property type="match status" value="1"/>
</dbReference>
<dbReference type="FunFam" id="1.10.940.10:FF:000001">
    <property type="entry name" value="Transcription antitermination factor NusB"/>
    <property type="match status" value="1"/>
</dbReference>
<dbReference type="Gene3D" id="1.10.940.10">
    <property type="entry name" value="NusB-like"/>
    <property type="match status" value="1"/>
</dbReference>
<dbReference type="HAMAP" id="MF_00073">
    <property type="entry name" value="NusB"/>
    <property type="match status" value="1"/>
</dbReference>
<dbReference type="InterPro" id="IPR035926">
    <property type="entry name" value="NusB-like_sf"/>
</dbReference>
<dbReference type="InterPro" id="IPR011605">
    <property type="entry name" value="NusB_fam"/>
</dbReference>
<dbReference type="InterPro" id="IPR006027">
    <property type="entry name" value="NusB_RsmB_TIM44"/>
</dbReference>
<dbReference type="NCBIfam" id="TIGR01951">
    <property type="entry name" value="nusB"/>
    <property type="match status" value="1"/>
</dbReference>
<dbReference type="PANTHER" id="PTHR11078:SF3">
    <property type="entry name" value="ANTITERMINATION NUSB DOMAIN-CONTAINING PROTEIN"/>
    <property type="match status" value="1"/>
</dbReference>
<dbReference type="PANTHER" id="PTHR11078">
    <property type="entry name" value="N UTILIZATION SUBSTANCE PROTEIN B-RELATED"/>
    <property type="match status" value="1"/>
</dbReference>
<dbReference type="Pfam" id="PF01029">
    <property type="entry name" value="NusB"/>
    <property type="match status" value="1"/>
</dbReference>
<dbReference type="SUPFAM" id="SSF48013">
    <property type="entry name" value="NusB-like"/>
    <property type="match status" value="1"/>
</dbReference>
<evidence type="ECO:0000255" key="1">
    <source>
        <dbReference type="HAMAP-Rule" id="MF_00073"/>
    </source>
</evidence>
<gene>
    <name evidence="1" type="primary">nusB</name>
    <name type="ordered locus">CPS_1532</name>
</gene>
<comment type="function">
    <text evidence="1">Involved in transcription antitermination. Required for transcription of ribosomal RNA (rRNA) genes. Binds specifically to the boxA antiterminator sequence of the ribosomal RNA (rrn) operons.</text>
</comment>
<comment type="similarity">
    <text evidence="1">Belongs to the NusB family.</text>
</comment>
<reference key="1">
    <citation type="journal article" date="2005" name="Proc. Natl. Acad. Sci. U.S.A.">
        <title>The psychrophilic lifestyle as revealed by the genome sequence of Colwellia psychrerythraea 34H through genomic and proteomic analyses.</title>
        <authorList>
            <person name="Methe B.A."/>
            <person name="Nelson K.E."/>
            <person name="Deming J.W."/>
            <person name="Momen B."/>
            <person name="Melamud E."/>
            <person name="Zhang X."/>
            <person name="Moult J."/>
            <person name="Madupu R."/>
            <person name="Nelson W.C."/>
            <person name="Dodson R.J."/>
            <person name="Brinkac L.M."/>
            <person name="Daugherty S.C."/>
            <person name="Durkin A.S."/>
            <person name="DeBoy R.T."/>
            <person name="Kolonay J.F."/>
            <person name="Sullivan S.A."/>
            <person name="Zhou L."/>
            <person name="Davidsen T.M."/>
            <person name="Wu M."/>
            <person name="Huston A.L."/>
            <person name="Lewis M."/>
            <person name="Weaver B."/>
            <person name="Weidman J.F."/>
            <person name="Khouri H."/>
            <person name="Utterback T.R."/>
            <person name="Feldblyum T.V."/>
            <person name="Fraser C.M."/>
        </authorList>
    </citation>
    <scope>NUCLEOTIDE SEQUENCE [LARGE SCALE GENOMIC DNA]</scope>
    <source>
        <strain>34H / ATCC BAA-681</strain>
    </source>
</reference>
<proteinExistence type="inferred from homology"/>
<organism>
    <name type="scientific">Colwellia psychrerythraea (strain 34H / ATCC BAA-681)</name>
    <name type="common">Vibrio psychroerythus</name>
    <dbReference type="NCBI Taxonomy" id="167879"/>
    <lineage>
        <taxon>Bacteria</taxon>
        <taxon>Pseudomonadati</taxon>
        <taxon>Pseudomonadota</taxon>
        <taxon>Gammaproteobacteria</taxon>
        <taxon>Alteromonadales</taxon>
        <taxon>Colwelliaceae</taxon>
        <taxon>Colwellia</taxon>
    </lineage>
</organism>
<feature type="chain" id="PRO_0000265508" description="Transcription antitermination protein NusB">
    <location>
        <begin position="1"/>
        <end position="138"/>
    </location>
</feature>
<sequence>MKPSPRRKARELAVQAVYSWQVSKNPVNDIEVNFIADNSKRRFDIEYFQLLLRGVTTNIGSIDEAIIPYVDRPLDDIDQVEKAILRVAVFELKDCTDVPYRVVINEAIELAKSFAADDSHKFVNGVLDKTVKLIRPQE</sequence>
<protein>
    <recommendedName>
        <fullName evidence="1">Transcription antitermination protein NusB</fullName>
    </recommendedName>
    <alternativeName>
        <fullName evidence="1">Antitermination factor NusB</fullName>
    </alternativeName>
</protein>
<keyword id="KW-0694">RNA-binding</keyword>
<keyword id="KW-0804">Transcription</keyword>
<keyword id="KW-0889">Transcription antitermination</keyword>
<keyword id="KW-0805">Transcription regulation</keyword>
<accession>Q485J1</accession>